<organism>
    <name type="scientific">Mus musculus</name>
    <name type="common">Mouse</name>
    <dbReference type="NCBI Taxonomy" id="10090"/>
    <lineage>
        <taxon>Eukaryota</taxon>
        <taxon>Metazoa</taxon>
        <taxon>Chordata</taxon>
        <taxon>Craniata</taxon>
        <taxon>Vertebrata</taxon>
        <taxon>Euteleostomi</taxon>
        <taxon>Mammalia</taxon>
        <taxon>Eutheria</taxon>
        <taxon>Euarchontoglires</taxon>
        <taxon>Glires</taxon>
        <taxon>Rodentia</taxon>
        <taxon>Myomorpha</taxon>
        <taxon>Muroidea</taxon>
        <taxon>Muridae</taxon>
        <taxon>Murinae</taxon>
        <taxon>Mus</taxon>
        <taxon>Mus</taxon>
    </lineage>
</organism>
<comment type="function">
    <text evidence="2">Plays a role in innate immunity.</text>
</comment>
<comment type="subcellular location">
    <subcellularLocation>
        <location evidence="2">Endosome membrane</location>
        <topology evidence="2">Multi-pass membrane protein</topology>
    </subcellularLocation>
    <subcellularLocation>
        <location evidence="2">Lysosome membrane</location>
        <topology evidence="2">Multi-pass membrane protein</topology>
    </subcellularLocation>
    <subcellularLocation>
        <location evidence="2">Golgi apparatus</location>
        <location evidence="2">trans-Golgi network membrane</location>
        <topology evidence="2">Multi-pass membrane protein</topology>
    </subcellularLocation>
</comment>
<comment type="similarity">
    <text evidence="4">Belongs to the TMEM45 family.</text>
</comment>
<dbReference type="EMBL" id="AK144325">
    <property type="protein sequence ID" value="BAE25835.1"/>
    <property type="molecule type" value="mRNA"/>
</dbReference>
<dbReference type="EMBL" id="BC018222">
    <property type="protein sequence ID" value="AAH18222.1"/>
    <property type="molecule type" value="mRNA"/>
</dbReference>
<dbReference type="EMBL" id="BC026654">
    <property type="protein sequence ID" value="AAH26654.1"/>
    <property type="molecule type" value="mRNA"/>
</dbReference>
<dbReference type="CCDS" id="CCDS22950.1"/>
<dbReference type="RefSeq" id="NP_659185.1">
    <property type="nucleotide sequence ID" value="NM_144936.1"/>
</dbReference>
<dbReference type="RefSeq" id="XP_011240784.1">
    <property type="nucleotide sequence ID" value="XM_011242482.3"/>
</dbReference>
<dbReference type="SMR" id="Q8VCZ2"/>
<dbReference type="FunCoup" id="Q8VCZ2">
    <property type="interactions" value="24"/>
</dbReference>
<dbReference type="STRING" id="10090.ENSMUSP00000042313"/>
<dbReference type="iPTMnet" id="Q8VCZ2"/>
<dbReference type="PhosphoSitePlus" id="Q8VCZ2"/>
<dbReference type="jPOST" id="Q8VCZ2"/>
<dbReference type="PaxDb" id="10090-ENSMUSP00000042313"/>
<dbReference type="PeptideAtlas" id="Q8VCZ2"/>
<dbReference type="ProteomicsDB" id="262830"/>
<dbReference type="Antibodypedia" id="19209">
    <property type="antibodies" value="9 antibodies from 7 providers"/>
</dbReference>
<dbReference type="DNASU" id="235135"/>
<dbReference type="Ensembl" id="ENSMUST00000048050.9">
    <property type="protein sequence ID" value="ENSMUSP00000042313.8"/>
    <property type="gene ID" value="ENSMUSG00000041737.9"/>
</dbReference>
<dbReference type="GeneID" id="235135"/>
<dbReference type="KEGG" id="mmu:235135"/>
<dbReference type="UCSC" id="uc009ort.1">
    <property type="organism name" value="mouse"/>
</dbReference>
<dbReference type="AGR" id="MGI:2384574"/>
<dbReference type="CTD" id="120224"/>
<dbReference type="MGI" id="MGI:2384574">
    <property type="gene designation" value="Tmem45b"/>
</dbReference>
<dbReference type="VEuPathDB" id="HostDB:ENSMUSG00000041737"/>
<dbReference type="eggNOG" id="ENOG502QU0J">
    <property type="taxonomic scope" value="Eukaryota"/>
</dbReference>
<dbReference type="GeneTree" id="ENSGT00940000157181"/>
<dbReference type="HOGENOM" id="CLU_059568_0_0_1"/>
<dbReference type="InParanoid" id="Q8VCZ2"/>
<dbReference type="OMA" id="SWYLSAT"/>
<dbReference type="OrthoDB" id="551896at2759"/>
<dbReference type="PhylomeDB" id="Q8VCZ2"/>
<dbReference type="TreeFam" id="TF328673"/>
<dbReference type="BioGRID-ORCS" id="235135">
    <property type="hits" value="5 hits in 76 CRISPR screens"/>
</dbReference>
<dbReference type="ChiTaRS" id="Tmem45b">
    <property type="organism name" value="mouse"/>
</dbReference>
<dbReference type="PRO" id="PR:Q8VCZ2"/>
<dbReference type="Proteomes" id="UP000000589">
    <property type="component" value="Chromosome 9"/>
</dbReference>
<dbReference type="RNAct" id="Q8VCZ2">
    <property type="molecule type" value="protein"/>
</dbReference>
<dbReference type="Bgee" id="ENSMUSG00000041737">
    <property type="expression patterns" value="Expressed in left colon and 139 other cell types or tissues"/>
</dbReference>
<dbReference type="ExpressionAtlas" id="Q8VCZ2">
    <property type="expression patterns" value="baseline and differential"/>
</dbReference>
<dbReference type="GO" id="GO:0010008">
    <property type="term" value="C:endosome membrane"/>
    <property type="evidence" value="ECO:0007669"/>
    <property type="project" value="UniProtKB-SubCell"/>
</dbReference>
<dbReference type="GO" id="GO:0005794">
    <property type="term" value="C:Golgi apparatus"/>
    <property type="evidence" value="ECO:0007669"/>
    <property type="project" value="UniProtKB-SubCell"/>
</dbReference>
<dbReference type="GO" id="GO:0005765">
    <property type="term" value="C:lysosomal membrane"/>
    <property type="evidence" value="ECO:0007669"/>
    <property type="project" value="UniProtKB-SubCell"/>
</dbReference>
<dbReference type="GO" id="GO:0045087">
    <property type="term" value="P:innate immune response"/>
    <property type="evidence" value="ECO:0007669"/>
    <property type="project" value="UniProtKB-KW"/>
</dbReference>
<dbReference type="InterPro" id="IPR006904">
    <property type="entry name" value="DUF716"/>
</dbReference>
<dbReference type="InterPro" id="IPR042127">
    <property type="entry name" value="TMEM45"/>
</dbReference>
<dbReference type="PANTHER" id="PTHR16007">
    <property type="entry name" value="EPIDIDYMAL MEMBRANE PROTEIN E9-RELATED"/>
    <property type="match status" value="1"/>
</dbReference>
<dbReference type="PANTHER" id="PTHR16007:SF59">
    <property type="entry name" value="TRANSMEMBRANE PROTEIN 45B"/>
    <property type="match status" value="1"/>
</dbReference>
<dbReference type="Pfam" id="PF04819">
    <property type="entry name" value="DUF716"/>
    <property type="match status" value="1"/>
</dbReference>
<evidence type="ECO:0000250" key="1">
    <source>
        <dbReference type="UniProtKB" id="Q497B2"/>
    </source>
</evidence>
<evidence type="ECO:0000250" key="2">
    <source>
        <dbReference type="UniProtKB" id="Q96B21"/>
    </source>
</evidence>
<evidence type="ECO:0000255" key="3"/>
<evidence type="ECO:0000305" key="4"/>
<evidence type="ECO:0007744" key="5">
    <source>
    </source>
</evidence>
<proteinExistence type="evidence at protein level"/>
<accession>Q8VCZ2</accession>
<accession>Q3UNB2</accession>
<gene>
    <name type="primary">Tmem45b</name>
</gene>
<keyword id="KW-0967">Endosome</keyword>
<keyword id="KW-0333">Golgi apparatus</keyword>
<keyword id="KW-0391">Immunity</keyword>
<keyword id="KW-0399">Innate immunity</keyword>
<keyword id="KW-0458">Lysosome</keyword>
<keyword id="KW-0472">Membrane</keyword>
<keyword id="KW-0597">Phosphoprotein</keyword>
<keyword id="KW-1185">Reference proteome</keyword>
<keyword id="KW-0812">Transmembrane</keyword>
<keyword id="KW-1133">Transmembrane helix</keyword>
<reference key="1">
    <citation type="journal article" date="2005" name="Science">
        <title>The transcriptional landscape of the mammalian genome.</title>
        <authorList>
            <person name="Carninci P."/>
            <person name="Kasukawa T."/>
            <person name="Katayama S."/>
            <person name="Gough J."/>
            <person name="Frith M.C."/>
            <person name="Maeda N."/>
            <person name="Oyama R."/>
            <person name="Ravasi T."/>
            <person name="Lenhard B."/>
            <person name="Wells C."/>
            <person name="Kodzius R."/>
            <person name="Shimokawa K."/>
            <person name="Bajic V.B."/>
            <person name="Brenner S.E."/>
            <person name="Batalov S."/>
            <person name="Forrest A.R."/>
            <person name="Zavolan M."/>
            <person name="Davis M.J."/>
            <person name="Wilming L.G."/>
            <person name="Aidinis V."/>
            <person name="Allen J.E."/>
            <person name="Ambesi-Impiombato A."/>
            <person name="Apweiler R."/>
            <person name="Aturaliya R.N."/>
            <person name="Bailey T.L."/>
            <person name="Bansal M."/>
            <person name="Baxter L."/>
            <person name="Beisel K.W."/>
            <person name="Bersano T."/>
            <person name="Bono H."/>
            <person name="Chalk A.M."/>
            <person name="Chiu K.P."/>
            <person name="Choudhary V."/>
            <person name="Christoffels A."/>
            <person name="Clutterbuck D.R."/>
            <person name="Crowe M.L."/>
            <person name="Dalla E."/>
            <person name="Dalrymple B.P."/>
            <person name="de Bono B."/>
            <person name="Della Gatta G."/>
            <person name="di Bernardo D."/>
            <person name="Down T."/>
            <person name="Engstrom P."/>
            <person name="Fagiolini M."/>
            <person name="Faulkner G."/>
            <person name="Fletcher C.F."/>
            <person name="Fukushima T."/>
            <person name="Furuno M."/>
            <person name="Futaki S."/>
            <person name="Gariboldi M."/>
            <person name="Georgii-Hemming P."/>
            <person name="Gingeras T.R."/>
            <person name="Gojobori T."/>
            <person name="Green R.E."/>
            <person name="Gustincich S."/>
            <person name="Harbers M."/>
            <person name="Hayashi Y."/>
            <person name="Hensch T.K."/>
            <person name="Hirokawa N."/>
            <person name="Hill D."/>
            <person name="Huminiecki L."/>
            <person name="Iacono M."/>
            <person name="Ikeo K."/>
            <person name="Iwama A."/>
            <person name="Ishikawa T."/>
            <person name="Jakt M."/>
            <person name="Kanapin A."/>
            <person name="Katoh M."/>
            <person name="Kawasawa Y."/>
            <person name="Kelso J."/>
            <person name="Kitamura H."/>
            <person name="Kitano H."/>
            <person name="Kollias G."/>
            <person name="Krishnan S.P."/>
            <person name="Kruger A."/>
            <person name="Kummerfeld S.K."/>
            <person name="Kurochkin I.V."/>
            <person name="Lareau L.F."/>
            <person name="Lazarevic D."/>
            <person name="Lipovich L."/>
            <person name="Liu J."/>
            <person name="Liuni S."/>
            <person name="McWilliam S."/>
            <person name="Madan Babu M."/>
            <person name="Madera M."/>
            <person name="Marchionni L."/>
            <person name="Matsuda H."/>
            <person name="Matsuzawa S."/>
            <person name="Miki H."/>
            <person name="Mignone F."/>
            <person name="Miyake S."/>
            <person name="Morris K."/>
            <person name="Mottagui-Tabar S."/>
            <person name="Mulder N."/>
            <person name="Nakano N."/>
            <person name="Nakauchi H."/>
            <person name="Ng P."/>
            <person name="Nilsson R."/>
            <person name="Nishiguchi S."/>
            <person name="Nishikawa S."/>
            <person name="Nori F."/>
            <person name="Ohara O."/>
            <person name="Okazaki Y."/>
            <person name="Orlando V."/>
            <person name="Pang K.C."/>
            <person name="Pavan W.J."/>
            <person name="Pavesi G."/>
            <person name="Pesole G."/>
            <person name="Petrovsky N."/>
            <person name="Piazza S."/>
            <person name="Reed J."/>
            <person name="Reid J.F."/>
            <person name="Ring B.Z."/>
            <person name="Ringwald M."/>
            <person name="Rost B."/>
            <person name="Ruan Y."/>
            <person name="Salzberg S.L."/>
            <person name="Sandelin A."/>
            <person name="Schneider C."/>
            <person name="Schoenbach C."/>
            <person name="Sekiguchi K."/>
            <person name="Semple C.A."/>
            <person name="Seno S."/>
            <person name="Sessa L."/>
            <person name="Sheng Y."/>
            <person name="Shibata Y."/>
            <person name="Shimada H."/>
            <person name="Shimada K."/>
            <person name="Silva D."/>
            <person name="Sinclair B."/>
            <person name="Sperling S."/>
            <person name="Stupka E."/>
            <person name="Sugiura K."/>
            <person name="Sultana R."/>
            <person name="Takenaka Y."/>
            <person name="Taki K."/>
            <person name="Tammoja K."/>
            <person name="Tan S.L."/>
            <person name="Tang S."/>
            <person name="Taylor M.S."/>
            <person name="Tegner J."/>
            <person name="Teichmann S.A."/>
            <person name="Ueda H.R."/>
            <person name="van Nimwegen E."/>
            <person name="Verardo R."/>
            <person name="Wei C.L."/>
            <person name="Yagi K."/>
            <person name="Yamanishi H."/>
            <person name="Zabarovsky E."/>
            <person name="Zhu S."/>
            <person name="Zimmer A."/>
            <person name="Hide W."/>
            <person name="Bult C."/>
            <person name="Grimmond S.M."/>
            <person name="Teasdale R.D."/>
            <person name="Liu E.T."/>
            <person name="Brusic V."/>
            <person name="Quackenbush J."/>
            <person name="Wahlestedt C."/>
            <person name="Mattick J.S."/>
            <person name="Hume D.A."/>
            <person name="Kai C."/>
            <person name="Sasaki D."/>
            <person name="Tomaru Y."/>
            <person name="Fukuda S."/>
            <person name="Kanamori-Katayama M."/>
            <person name="Suzuki M."/>
            <person name="Aoki J."/>
            <person name="Arakawa T."/>
            <person name="Iida J."/>
            <person name="Imamura K."/>
            <person name="Itoh M."/>
            <person name="Kato T."/>
            <person name="Kawaji H."/>
            <person name="Kawagashira N."/>
            <person name="Kawashima T."/>
            <person name="Kojima M."/>
            <person name="Kondo S."/>
            <person name="Konno H."/>
            <person name="Nakano K."/>
            <person name="Ninomiya N."/>
            <person name="Nishio T."/>
            <person name="Okada M."/>
            <person name="Plessy C."/>
            <person name="Shibata K."/>
            <person name="Shiraki T."/>
            <person name="Suzuki S."/>
            <person name="Tagami M."/>
            <person name="Waki K."/>
            <person name="Watahiki A."/>
            <person name="Okamura-Oho Y."/>
            <person name="Suzuki H."/>
            <person name="Kawai J."/>
            <person name="Hayashizaki Y."/>
        </authorList>
    </citation>
    <scope>NUCLEOTIDE SEQUENCE [LARGE SCALE MRNA]</scope>
    <source>
        <strain>C57BL/6J</strain>
        <tissue>Gall bladder</tissue>
    </source>
</reference>
<reference key="2">
    <citation type="journal article" date="2004" name="Genome Res.">
        <title>The status, quality, and expansion of the NIH full-length cDNA project: the Mammalian Gene Collection (MGC).</title>
        <authorList>
            <consortium name="The MGC Project Team"/>
        </authorList>
    </citation>
    <scope>NUCLEOTIDE SEQUENCE [LARGE SCALE MRNA]</scope>
    <source>
        <strain>FVB/N</strain>
        <tissue>Colon</tissue>
        <tissue>Kidney</tissue>
    </source>
</reference>
<reference key="3">
    <citation type="journal article" date="2010" name="Cell">
        <title>A tissue-specific atlas of mouse protein phosphorylation and expression.</title>
        <authorList>
            <person name="Huttlin E.L."/>
            <person name="Jedrychowski M.P."/>
            <person name="Elias J.E."/>
            <person name="Goswami T."/>
            <person name="Rad R."/>
            <person name="Beausoleil S.A."/>
            <person name="Villen J."/>
            <person name="Haas W."/>
            <person name="Sowa M.E."/>
            <person name="Gygi S.P."/>
        </authorList>
    </citation>
    <scope>PHOSPHORYLATION [LARGE SCALE ANALYSIS] AT SER-275</scope>
    <scope>IDENTIFICATION BY MASS SPECTROMETRY [LARGE SCALE ANALYSIS]</scope>
    <source>
        <tissue>Brown adipose tissue</tissue>
        <tissue>Kidney</tissue>
    </source>
</reference>
<sequence>MANFKGHALPGSFFLIVGLWWSVKYPLKYFHHKGLKNNRLSRQQERIEIIEGAVKTLFAIIGILAEQFVPDGPHLHLYHENQWVKLMNWQHSTMYLFFGVSGLMDMITYLYFHIVPLGLDRVVLAMAVFIEGFLFYFHVHNRPPLDQHIHSLLLFGLFGAAVSISLEVILRDNIVLELFRTSLLILQGTWFWQIGFVLFPPFGRPEWDQKDMDNIMFITMCFCWHYLVALCIVAINYSLVYCFLTRVKRRAEGEIIGIQKLKSDHTYQSALLSGSDEE</sequence>
<feature type="chain" id="PRO_0000271200" description="Transmembrane protein 45B">
    <location>
        <begin position="1"/>
        <end position="278"/>
    </location>
</feature>
<feature type="transmembrane region" description="Helical" evidence="3">
    <location>
        <begin position="7"/>
        <end position="27"/>
    </location>
</feature>
<feature type="transmembrane region" description="Helical" evidence="3">
    <location>
        <begin position="49"/>
        <end position="69"/>
    </location>
</feature>
<feature type="transmembrane region" description="Helical" evidence="3">
    <location>
        <begin position="95"/>
        <end position="115"/>
    </location>
</feature>
<feature type="transmembrane region" description="Helical" evidence="3">
    <location>
        <begin position="117"/>
        <end position="137"/>
    </location>
</feature>
<feature type="transmembrane region" description="Helical" evidence="3">
    <location>
        <begin position="149"/>
        <end position="169"/>
    </location>
</feature>
<feature type="transmembrane region" description="Helical" evidence="3">
    <location>
        <begin position="183"/>
        <end position="203"/>
    </location>
</feature>
<feature type="transmembrane region" description="Helical" evidence="3">
    <location>
        <begin position="215"/>
        <end position="235"/>
    </location>
</feature>
<feature type="modified residue" description="Phosphoserine" evidence="1">
    <location>
        <position position="273"/>
    </location>
</feature>
<feature type="modified residue" description="Phosphoserine" evidence="5">
    <location>
        <position position="275"/>
    </location>
</feature>
<feature type="sequence conflict" description="In Ref. 1; BAE25835." evidence="4" ref="1">
    <original>L</original>
    <variation>P</variation>
    <location>
        <position position="157"/>
    </location>
</feature>
<protein>
    <recommendedName>
        <fullName>Transmembrane protein 45B</fullName>
    </recommendedName>
</protein>
<name>TM45B_MOUSE</name>